<reference key="1">
    <citation type="journal article" date="2008" name="PLoS ONE">
        <title>Genome sequence of Brucella abortus vaccine strain S19 compared to virulent strains yields candidate virulence genes.</title>
        <authorList>
            <person name="Crasta O.R."/>
            <person name="Folkerts O."/>
            <person name="Fei Z."/>
            <person name="Mane S.P."/>
            <person name="Evans C."/>
            <person name="Martino-Catt S."/>
            <person name="Bricker B."/>
            <person name="Yu G."/>
            <person name="Du L."/>
            <person name="Sobral B.W."/>
        </authorList>
    </citation>
    <scope>NUCLEOTIDE SEQUENCE [LARGE SCALE GENOMIC DNA]</scope>
    <source>
        <strain>S19</strain>
    </source>
</reference>
<feature type="chain" id="PRO_1000121593" description="Large ribosomal subunit protein bL28">
    <location>
        <begin position="1"/>
        <end position="97"/>
    </location>
</feature>
<keyword id="KW-0687">Ribonucleoprotein</keyword>
<keyword id="KW-0689">Ribosomal protein</keyword>
<proteinExistence type="inferred from homology"/>
<comment type="similarity">
    <text evidence="1">Belongs to the bacterial ribosomal protein bL28 family.</text>
</comment>
<name>RL28_BRUA1</name>
<accession>B2S8R7</accession>
<protein>
    <recommendedName>
        <fullName evidence="1">Large ribosomal subunit protein bL28</fullName>
    </recommendedName>
    <alternativeName>
        <fullName evidence="2">50S ribosomal protein L28</fullName>
    </alternativeName>
</protein>
<dbReference type="EMBL" id="CP000887">
    <property type="protein sequence ID" value="ACD73371.1"/>
    <property type="molecule type" value="Genomic_DNA"/>
</dbReference>
<dbReference type="RefSeq" id="WP_002965079.1">
    <property type="nucleotide sequence ID" value="NC_010742.1"/>
</dbReference>
<dbReference type="SMR" id="B2S8R7"/>
<dbReference type="GeneID" id="97534716"/>
<dbReference type="KEGG" id="bmc:BAbS19_I18890"/>
<dbReference type="HOGENOM" id="CLU_064548_4_2_5"/>
<dbReference type="Proteomes" id="UP000002565">
    <property type="component" value="Chromosome 1"/>
</dbReference>
<dbReference type="GO" id="GO:0022625">
    <property type="term" value="C:cytosolic large ribosomal subunit"/>
    <property type="evidence" value="ECO:0007669"/>
    <property type="project" value="TreeGrafter"/>
</dbReference>
<dbReference type="GO" id="GO:0003735">
    <property type="term" value="F:structural constituent of ribosome"/>
    <property type="evidence" value="ECO:0007669"/>
    <property type="project" value="InterPro"/>
</dbReference>
<dbReference type="GO" id="GO:0006412">
    <property type="term" value="P:translation"/>
    <property type="evidence" value="ECO:0007669"/>
    <property type="project" value="UniProtKB-UniRule"/>
</dbReference>
<dbReference type="Gene3D" id="2.30.170.40">
    <property type="entry name" value="Ribosomal protein L28/L24"/>
    <property type="match status" value="1"/>
</dbReference>
<dbReference type="HAMAP" id="MF_00373">
    <property type="entry name" value="Ribosomal_bL28"/>
    <property type="match status" value="1"/>
</dbReference>
<dbReference type="InterPro" id="IPR026569">
    <property type="entry name" value="Ribosomal_bL28"/>
</dbReference>
<dbReference type="InterPro" id="IPR034704">
    <property type="entry name" value="Ribosomal_bL28/bL31-like_sf"/>
</dbReference>
<dbReference type="InterPro" id="IPR001383">
    <property type="entry name" value="Ribosomal_bL28_bact-type"/>
</dbReference>
<dbReference type="InterPro" id="IPR037147">
    <property type="entry name" value="Ribosomal_bL28_sf"/>
</dbReference>
<dbReference type="NCBIfam" id="TIGR00009">
    <property type="entry name" value="L28"/>
    <property type="match status" value="1"/>
</dbReference>
<dbReference type="PANTHER" id="PTHR13528">
    <property type="entry name" value="39S RIBOSOMAL PROTEIN L28, MITOCHONDRIAL"/>
    <property type="match status" value="1"/>
</dbReference>
<dbReference type="PANTHER" id="PTHR13528:SF2">
    <property type="entry name" value="LARGE RIBOSOMAL SUBUNIT PROTEIN BL28M"/>
    <property type="match status" value="1"/>
</dbReference>
<dbReference type="Pfam" id="PF00830">
    <property type="entry name" value="Ribosomal_L28"/>
    <property type="match status" value="1"/>
</dbReference>
<dbReference type="SUPFAM" id="SSF143800">
    <property type="entry name" value="L28p-like"/>
    <property type="match status" value="1"/>
</dbReference>
<evidence type="ECO:0000255" key="1">
    <source>
        <dbReference type="HAMAP-Rule" id="MF_00373"/>
    </source>
</evidence>
<evidence type="ECO:0000305" key="2"/>
<gene>
    <name evidence="1" type="primary">rpmB</name>
    <name type="ordered locus">BAbS19_I18890</name>
</gene>
<sequence length="97" mass="10869">MSRACELTGKSVQYGNNVSHANNRTRRRFLPNLCNVTLISETLGQSYRLRISANALRSVEHRGGLDAFLVKSDDKELSQRARLLKRQIAKKQAEAAA</sequence>
<organism>
    <name type="scientific">Brucella abortus (strain S19)</name>
    <dbReference type="NCBI Taxonomy" id="430066"/>
    <lineage>
        <taxon>Bacteria</taxon>
        <taxon>Pseudomonadati</taxon>
        <taxon>Pseudomonadota</taxon>
        <taxon>Alphaproteobacteria</taxon>
        <taxon>Hyphomicrobiales</taxon>
        <taxon>Brucellaceae</taxon>
        <taxon>Brucella/Ochrobactrum group</taxon>
        <taxon>Brucella</taxon>
    </lineage>
</organism>